<keyword id="KW-0687">Ribonucleoprotein</keyword>
<keyword id="KW-0689">Ribosomal protein</keyword>
<keyword id="KW-0694">RNA-binding</keyword>
<keyword id="KW-0699">rRNA-binding</keyword>
<organism>
    <name type="scientific">Streptococcus pyogenes serotype M28 (strain MGAS6180)</name>
    <dbReference type="NCBI Taxonomy" id="319701"/>
    <lineage>
        <taxon>Bacteria</taxon>
        <taxon>Bacillati</taxon>
        <taxon>Bacillota</taxon>
        <taxon>Bacilli</taxon>
        <taxon>Lactobacillales</taxon>
        <taxon>Streptococcaceae</taxon>
        <taxon>Streptococcus</taxon>
    </lineage>
</organism>
<reference key="1">
    <citation type="journal article" date="2005" name="J. Infect. Dis.">
        <title>Genome sequence of a serotype M28 strain of group A Streptococcus: potential new insights into puerperal sepsis and bacterial disease specificity.</title>
        <authorList>
            <person name="Green N.M."/>
            <person name="Zhang S."/>
            <person name="Porcella S.F."/>
            <person name="Nagiec M.J."/>
            <person name="Barbian K.D."/>
            <person name="Beres S.B."/>
            <person name="Lefebvre R.B."/>
            <person name="Musser J.M."/>
        </authorList>
    </citation>
    <scope>NUCLEOTIDE SEQUENCE [LARGE SCALE GENOMIC DNA]</scope>
    <source>
        <strain>MGAS6180</strain>
    </source>
</reference>
<accession>Q48RL0</accession>
<dbReference type="EMBL" id="CP000056">
    <property type="protein sequence ID" value="AAX72650.1"/>
    <property type="molecule type" value="Genomic_DNA"/>
</dbReference>
<dbReference type="RefSeq" id="WP_002983142.1">
    <property type="nucleotide sequence ID" value="NC_007296.2"/>
</dbReference>
<dbReference type="SMR" id="Q48RL0"/>
<dbReference type="GeneID" id="93826879"/>
<dbReference type="KEGG" id="spb:M28_Spy1540"/>
<dbReference type="HOGENOM" id="CLU_148710_2_2_9"/>
<dbReference type="GO" id="GO:0022627">
    <property type="term" value="C:cytosolic small ribosomal subunit"/>
    <property type="evidence" value="ECO:0007669"/>
    <property type="project" value="TreeGrafter"/>
</dbReference>
<dbReference type="GO" id="GO:0070181">
    <property type="term" value="F:small ribosomal subunit rRNA binding"/>
    <property type="evidence" value="ECO:0007669"/>
    <property type="project" value="TreeGrafter"/>
</dbReference>
<dbReference type="GO" id="GO:0003735">
    <property type="term" value="F:structural constituent of ribosome"/>
    <property type="evidence" value="ECO:0007669"/>
    <property type="project" value="InterPro"/>
</dbReference>
<dbReference type="GO" id="GO:0006412">
    <property type="term" value="P:translation"/>
    <property type="evidence" value="ECO:0007669"/>
    <property type="project" value="UniProtKB-UniRule"/>
</dbReference>
<dbReference type="FunFam" id="4.10.640.10:FF:000003">
    <property type="entry name" value="30S ribosomal protein S18"/>
    <property type="match status" value="1"/>
</dbReference>
<dbReference type="Gene3D" id="4.10.640.10">
    <property type="entry name" value="Ribosomal protein S18"/>
    <property type="match status" value="1"/>
</dbReference>
<dbReference type="HAMAP" id="MF_00270">
    <property type="entry name" value="Ribosomal_bS18"/>
    <property type="match status" value="1"/>
</dbReference>
<dbReference type="InterPro" id="IPR001648">
    <property type="entry name" value="Ribosomal_bS18"/>
</dbReference>
<dbReference type="InterPro" id="IPR018275">
    <property type="entry name" value="Ribosomal_bS18_CS"/>
</dbReference>
<dbReference type="InterPro" id="IPR036870">
    <property type="entry name" value="Ribosomal_bS18_sf"/>
</dbReference>
<dbReference type="NCBIfam" id="TIGR00165">
    <property type="entry name" value="S18"/>
    <property type="match status" value="1"/>
</dbReference>
<dbReference type="PANTHER" id="PTHR13479">
    <property type="entry name" value="30S RIBOSOMAL PROTEIN S18"/>
    <property type="match status" value="1"/>
</dbReference>
<dbReference type="PANTHER" id="PTHR13479:SF40">
    <property type="entry name" value="SMALL RIBOSOMAL SUBUNIT PROTEIN BS18M"/>
    <property type="match status" value="1"/>
</dbReference>
<dbReference type="Pfam" id="PF01084">
    <property type="entry name" value="Ribosomal_S18"/>
    <property type="match status" value="1"/>
</dbReference>
<dbReference type="PRINTS" id="PR00974">
    <property type="entry name" value="RIBOSOMALS18"/>
</dbReference>
<dbReference type="SUPFAM" id="SSF46911">
    <property type="entry name" value="Ribosomal protein S18"/>
    <property type="match status" value="1"/>
</dbReference>
<dbReference type="PROSITE" id="PS00057">
    <property type="entry name" value="RIBOSOMAL_S18"/>
    <property type="match status" value="1"/>
</dbReference>
<evidence type="ECO:0000255" key="1">
    <source>
        <dbReference type="HAMAP-Rule" id="MF_00270"/>
    </source>
</evidence>
<evidence type="ECO:0000305" key="2"/>
<proteinExistence type="inferred from homology"/>
<comment type="function">
    <text evidence="1">Binds as a heterodimer with protein bS6 to the central domain of the 16S rRNA, where it helps stabilize the platform of the 30S subunit.</text>
</comment>
<comment type="subunit">
    <text evidence="1">Part of the 30S ribosomal subunit. Forms a tight heterodimer with protein bS6.</text>
</comment>
<comment type="similarity">
    <text evidence="1">Belongs to the bacterial ribosomal protein bS18 family.</text>
</comment>
<sequence length="79" mass="9204">MAQQRRGGFKRRKKVDFIAANKIEYVDYKDTELLSRFVSERGKILPRRVTGTSAKNQRKVTTAIKRARVMALMPYVNED</sequence>
<feature type="chain" id="PRO_1000003631" description="Small ribosomal subunit protein bS18">
    <location>
        <begin position="1"/>
        <end position="79"/>
    </location>
</feature>
<name>RS18_STRPM</name>
<protein>
    <recommendedName>
        <fullName evidence="1">Small ribosomal subunit protein bS18</fullName>
    </recommendedName>
    <alternativeName>
        <fullName evidence="2">30S ribosomal protein S18</fullName>
    </alternativeName>
</protein>
<gene>
    <name evidence="1" type="primary">rpsR</name>
    <name type="ordered locus">M28_Spy1540</name>
</gene>